<keyword id="KW-0040">ANK repeat</keyword>
<keyword id="KW-0315">Glutamine amidotransferase</keyword>
<keyword id="KW-0677">Repeat</keyword>
<accession>Q4UKX2</accession>
<proteinExistence type="predicted"/>
<feature type="chain" id="PRO_0000281756" description="Putative ankyrin repeat protein RF_0950">
    <location>
        <begin position="1"/>
        <end position="395"/>
    </location>
</feature>
<feature type="repeat" description="ANK 1">
    <location>
        <begin position="3"/>
        <end position="32"/>
    </location>
</feature>
<feature type="repeat" description="ANK 2">
    <location>
        <begin position="36"/>
        <end position="65"/>
    </location>
</feature>
<feature type="repeat" description="ANK 3">
    <location>
        <begin position="69"/>
        <end position="98"/>
    </location>
</feature>
<feature type="repeat" description="ANK 4">
    <location>
        <begin position="101"/>
        <end position="130"/>
    </location>
</feature>
<feature type="repeat" description="ANK 5">
    <location>
        <begin position="134"/>
        <end position="166"/>
    </location>
</feature>
<feature type="repeat" description="ANK 6">
    <location>
        <begin position="172"/>
        <end position="201"/>
    </location>
</feature>
<feature type="repeat" description="ANK 7">
    <location>
        <begin position="205"/>
        <end position="234"/>
    </location>
</feature>
<feature type="domain" description="Glutamine amidotransferase type-1" evidence="1">
    <location>
        <begin position="272"/>
        <end position="395"/>
    </location>
</feature>
<feature type="active site" description="Nucleophile" evidence="1">
    <location>
        <position position="377"/>
    </location>
</feature>
<gene>
    <name type="ordered locus">RF_0950</name>
</gene>
<sequence>MNYQKELLIEAIQEDNLKEVQKLLQAGVNPNTLDEYGKLCIRSAINNENLDIVKVLLDYGADPNAIDKIKDPIILEAIRSRELGIINSLLKKGANPNVLDRHENPIILSALPRGVNIVNTLLNNGADPNQVDKNGNTALSIILERTGDINVDVTALLIEKVKEKALNLRNSNGETCLHLAAQQGKIQMFDKYLDYYQTVNITDKAGNTPLYWSKLLGHTEISDMLNKRAEELNETAYTKITKTERFEDLPPRPKIALSYNLEIGGRYANEEKTKLIYQGGDVEYIDFRAIVPESANTEKKINEEVINEAKQKAKELLAGKDALVIPGNNREVDKEVAKHFGGEVNIKTGQPDFARSLAEMVMAEVAIEKGMPIMGICGGHQIINTYLKVPILKEK</sequence>
<name>Y950_RICFE</name>
<organism>
    <name type="scientific">Rickettsia felis (strain ATCC VR-1525 / URRWXCal2)</name>
    <name type="common">Rickettsia azadi</name>
    <dbReference type="NCBI Taxonomy" id="315456"/>
    <lineage>
        <taxon>Bacteria</taxon>
        <taxon>Pseudomonadati</taxon>
        <taxon>Pseudomonadota</taxon>
        <taxon>Alphaproteobacteria</taxon>
        <taxon>Rickettsiales</taxon>
        <taxon>Rickettsiaceae</taxon>
        <taxon>Rickettsieae</taxon>
        <taxon>Rickettsia</taxon>
        <taxon>spotted fever group</taxon>
    </lineage>
</organism>
<evidence type="ECO:0000255" key="1">
    <source>
        <dbReference type="PROSITE-ProRule" id="PRU00605"/>
    </source>
</evidence>
<protein>
    <recommendedName>
        <fullName>Putative ankyrin repeat protein RF_0950</fullName>
    </recommendedName>
</protein>
<dbReference type="EMBL" id="CP000053">
    <property type="protein sequence ID" value="AAY61801.1"/>
    <property type="molecule type" value="Genomic_DNA"/>
</dbReference>
<dbReference type="SMR" id="Q4UKX2"/>
<dbReference type="STRING" id="315456.RF_0950"/>
<dbReference type="KEGG" id="rfe:RF_0950"/>
<dbReference type="eggNOG" id="COG0666">
    <property type="taxonomic scope" value="Bacteria"/>
</dbReference>
<dbReference type="eggNOG" id="COG2071">
    <property type="taxonomic scope" value="Bacteria"/>
</dbReference>
<dbReference type="HOGENOM" id="CLU_640655_0_0_5"/>
<dbReference type="Proteomes" id="UP000008548">
    <property type="component" value="Chromosome"/>
</dbReference>
<dbReference type="GO" id="GO:0016787">
    <property type="term" value="F:hydrolase activity"/>
    <property type="evidence" value="ECO:0007669"/>
    <property type="project" value="InterPro"/>
</dbReference>
<dbReference type="Gene3D" id="3.40.50.880">
    <property type="match status" value="1"/>
</dbReference>
<dbReference type="Gene3D" id="1.25.40.20">
    <property type="entry name" value="Ankyrin repeat-containing domain"/>
    <property type="match status" value="1"/>
</dbReference>
<dbReference type="InterPro" id="IPR002110">
    <property type="entry name" value="Ankyrin_rpt"/>
</dbReference>
<dbReference type="InterPro" id="IPR036770">
    <property type="entry name" value="Ankyrin_rpt-contain_sf"/>
</dbReference>
<dbReference type="InterPro" id="IPR029062">
    <property type="entry name" value="Class_I_gatase-like"/>
</dbReference>
<dbReference type="InterPro" id="IPR051165">
    <property type="entry name" value="Multifunctional_ANK_Repeat"/>
</dbReference>
<dbReference type="InterPro" id="IPR011697">
    <property type="entry name" value="Peptidase_C26"/>
</dbReference>
<dbReference type="PANTHER" id="PTHR24123">
    <property type="entry name" value="ANKYRIN REPEAT-CONTAINING"/>
    <property type="match status" value="1"/>
</dbReference>
<dbReference type="PANTHER" id="PTHR24123:SF33">
    <property type="entry name" value="PROTEIN HOS4"/>
    <property type="match status" value="1"/>
</dbReference>
<dbReference type="Pfam" id="PF12796">
    <property type="entry name" value="Ank_2"/>
    <property type="match status" value="2"/>
</dbReference>
<dbReference type="Pfam" id="PF07722">
    <property type="entry name" value="Peptidase_C26"/>
    <property type="match status" value="1"/>
</dbReference>
<dbReference type="SMART" id="SM00248">
    <property type="entry name" value="ANK"/>
    <property type="match status" value="7"/>
</dbReference>
<dbReference type="SUPFAM" id="SSF48403">
    <property type="entry name" value="Ankyrin repeat"/>
    <property type="match status" value="1"/>
</dbReference>
<dbReference type="SUPFAM" id="SSF52317">
    <property type="entry name" value="Class I glutamine amidotransferase-like"/>
    <property type="match status" value="1"/>
</dbReference>
<dbReference type="PROSITE" id="PS50297">
    <property type="entry name" value="ANK_REP_REGION"/>
    <property type="match status" value="1"/>
</dbReference>
<dbReference type="PROSITE" id="PS50088">
    <property type="entry name" value="ANK_REPEAT"/>
    <property type="match status" value="2"/>
</dbReference>
<dbReference type="PROSITE" id="PS51273">
    <property type="entry name" value="GATASE_TYPE_1"/>
    <property type="match status" value="1"/>
</dbReference>
<reference key="1">
    <citation type="journal article" date="2005" name="PLoS Biol.">
        <title>The genome sequence of Rickettsia felis identifies the first putative conjugative plasmid in an obligate intracellular parasite.</title>
        <authorList>
            <person name="Ogata H."/>
            <person name="Renesto P."/>
            <person name="Audic S."/>
            <person name="Robert C."/>
            <person name="Blanc G."/>
            <person name="Fournier P.-E."/>
            <person name="Parinello H."/>
            <person name="Claverie J.-M."/>
            <person name="Raoult D."/>
        </authorList>
    </citation>
    <scope>NUCLEOTIDE SEQUENCE [LARGE SCALE GENOMIC DNA]</scope>
    <source>
        <strain>ATCC VR-1525 / URRWXCal2</strain>
    </source>
</reference>